<sequence length="428" mass="49689">MRDEVAEKEKADINVTLVFQGYENTPIMVCVDGIVFSKPDLVTCLEQRKKPWSMKHPGLTQHNIVHTGDKPYKCKDCGKIFKWSSNLTIHQRIHSGEKPYKCEECGKAFKQSSKLNEHMRAHTGEKFYKCEECGKAFKHPSGLTLHKRIHTGENPYKFEECDKAFYWVLSFTKHMIIHRGEKPYKYQECGKAFKWSSNLTIHKRIHTGEKPCKCEECGKACKQSLGLTIQKRIHTEEKPYKCEECGSSNLTIYKKIHAGEKPYNCEKCGKAFYCSSNLIQNNIVHAEEKHYKCQECGKAFKKSLDLNVHKIIHSGEKPYRYEECGKITHSGEESYKCEECGKGFYCSSSLTKHMIVHTEEKLYKCEECGKAFKWSSELTIHQRIRTEEKPYKCEECVRVFKHSSKLNEHKRNHTGEKPYKCEACGKAF</sequence>
<name>Z355P_HUMAN</name>
<accession>Q9NSJ1</accession>
<reference key="1">
    <citation type="journal article" date="2000" name="Nature">
        <title>The DNA sequence of human chromosome 21.</title>
        <authorList>
            <person name="Hattori M."/>
            <person name="Fujiyama A."/>
            <person name="Taylor T.D."/>
            <person name="Watanabe H."/>
            <person name="Yada T."/>
            <person name="Park H.-S."/>
            <person name="Toyoda A."/>
            <person name="Ishii K."/>
            <person name="Totoki Y."/>
            <person name="Choi D.-K."/>
            <person name="Groner Y."/>
            <person name="Soeda E."/>
            <person name="Ohki M."/>
            <person name="Takagi T."/>
            <person name="Sakaki Y."/>
            <person name="Taudien S."/>
            <person name="Blechschmidt K."/>
            <person name="Polley A."/>
            <person name="Menzel U."/>
            <person name="Delabar J."/>
            <person name="Kumpf K."/>
            <person name="Lehmann R."/>
            <person name="Patterson D."/>
            <person name="Reichwald K."/>
            <person name="Rump A."/>
            <person name="Schillhabel M."/>
            <person name="Schudy A."/>
            <person name="Zimmermann W."/>
            <person name="Rosenthal A."/>
            <person name="Kudoh J."/>
            <person name="Shibuya K."/>
            <person name="Kawasaki K."/>
            <person name="Asakawa S."/>
            <person name="Shintani A."/>
            <person name="Sasaki T."/>
            <person name="Nagamine K."/>
            <person name="Mitsuyama S."/>
            <person name="Antonarakis S.E."/>
            <person name="Minoshima S."/>
            <person name="Shimizu N."/>
            <person name="Nordsiek G."/>
            <person name="Hornischer K."/>
            <person name="Brandt P."/>
            <person name="Scharfe M."/>
            <person name="Schoen O."/>
            <person name="Desario A."/>
            <person name="Reichelt J."/>
            <person name="Kauer G."/>
            <person name="Bloecker H."/>
            <person name="Ramser J."/>
            <person name="Beck A."/>
            <person name="Klages S."/>
            <person name="Hennig S."/>
            <person name="Riesselmann L."/>
            <person name="Dagand E."/>
            <person name="Wehrmeyer S."/>
            <person name="Borzym K."/>
            <person name="Gardiner K."/>
            <person name="Nizetic D."/>
            <person name="Francis F."/>
            <person name="Lehrach H."/>
            <person name="Reinhardt R."/>
            <person name="Yaspo M.-L."/>
        </authorList>
    </citation>
    <scope>NUCLEOTIDE SEQUENCE [LARGE SCALE GENOMIC DNA]</scope>
</reference>
<reference key="2">
    <citation type="journal article" date="1992" name="Genomics">
        <title>High-resolution localization of 69 potential human zinc finger protein genes: a number are clustered.</title>
        <authorList>
            <person name="Hoovers J.M.N."/>
            <person name="Mannens M."/>
            <person name="John R."/>
            <person name="Bliek J."/>
            <person name="van Heyningen V."/>
            <person name="Porteous D.J."/>
            <person name="Leschot N.J."/>
            <person name="Westerveld A."/>
            <person name="Little P.F.R."/>
        </authorList>
    </citation>
    <scope>NUCLEOTIDE SEQUENCE [GENOMIC DNA] OF 58-83</scope>
</reference>
<protein>
    <recommendedName>
        <fullName>Putative zinc finger protein 355P</fullName>
    </recommendedName>
    <alternativeName>
        <fullName>Zinc finger protein ZnFP01</fullName>
    </alternativeName>
</protein>
<proteinExistence type="uncertain"/>
<organism>
    <name type="scientific">Homo sapiens</name>
    <name type="common">Human</name>
    <dbReference type="NCBI Taxonomy" id="9606"/>
    <lineage>
        <taxon>Eukaryota</taxon>
        <taxon>Metazoa</taxon>
        <taxon>Chordata</taxon>
        <taxon>Craniata</taxon>
        <taxon>Vertebrata</taxon>
        <taxon>Euteleostomi</taxon>
        <taxon>Mammalia</taxon>
        <taxon>Eutheria</taxon>
        <taxon>Euarchontoglires</taxon>
        <taxon>Primates</taxon>
        <taxon>Haplorrhini</taxon>
        <taxon>Catarrhini</taxon>
        <taxon>Hominidae</taxon>
        <taxon>Homo</taxon>
    </lineage>
</organism>
<comment type="function">
    <text evidence="1">May be involved in transcriptional regulation.</text>
</comment>
<comment type="subcellular location">
    <subcellularLocation>
        <location evidence="4">Nucleus</location>
    </subcellularLocation>
</comment>
<comment type="similarity">
    <text evidence="4">Belongs to the krueppel C2H2-type zinc-finger protein family.</text>
</comment>
<comment type="caution">
    <text evidence="4">Could be the product of a pseudogene.</text>
</comment>
<comment type="sequence caution" evidence="4">
    <conflict type="erroneous gene model prediction">
        <sequence resource="EMBL-CDS" id="CAB90395"/>
    </conflict>
</comment>
<evidence type="ECO:0000250" key="1"/>
<evidence type="ECO:0000255" key="2">
    <source>
        <dbReference type="PROSITE-ProRule" id="PRU00042"/>
    </source>
</evidence>
<evidence type="ECO:0000255" key="3">
    <source>
        <dbReference type="PROSITE-ProRule" id="PRU00119"/>
    </source>
</evidence>
<evidence type="ECO:0000305" key="4"/>
<dbReference type="EMBL" id="AL163202">
    <property type="protein sequence ID" value="CAB90395.1"/>
    <property type="status" value="ALT_SEQ"/>
    <property type="molecule type" value="Genomic_DNA"/>
</dbReference>
<dbReference type="PIR" id="A42075">
    <property type="entry name" value="A42075"/>
</dbReference>
<dbReference type="SMR" id="Q9NSJ1"/>
<dbReference type="iPTMnet" id="Q9NSJ1"/>
<dbReference type="PhosphoSitePlus" id="Q9NSJ1"/>
<dbReference type="BioMuta" id="HGNC:17218"/>
<dbReference type="DMDM" id="187671925"/>
<dbReference type="jPOST" id="Q9NSJ1"/>
<dbReference type="MassIVE" id="Q9NSJ1"/>
<dbReference type="PeptideAtlas" id="Q9NSJ1"/>
<dbReference type="ProteomicsDB" id="82561"/>
<dbReference type="Pumba" id="Q9NSJ1"/>
<dbReference type="AGR" id="HGNC:17218"/>
<dbReference type="GeneCards" id="ZNF355P"/>
<dbReference type="HGNC" id="HGNC:17218">
    <property type="gene designation" value="ZNF355P"/>
</dbReference>
<dbReference type="neXtProt" id="NX_Q9NSJ1"/>
<dbReference type="InParanoid" id="Q9NSJ1"/>
<dbReference type="PAN-GO" id="Q9NSJ1">
    <property type="GO annotations" value="4 GO annotations based on evolutionary models"/>
</dbReference>
<dbReference type="PhylomeDB" id="Q9NSJ1"/>
<dbReference type="Pharos" id="Q9NSJ1">
    <property type="development level" value="Tdark"/>
</dbReference>
<dbReference type="Proteomes" id="UP000005640">
    <property type="component" value="Unplaced"/>
</dbReference>
<dbReference type="RNAct" id="Q9NSJ1">
    <property type="molecule type" value="protein"/>
</dbReference>
<dbReference type="GO" id="GO:0005634">
    <property type="term" value="C:nucleus"/>
    <property type="evidence" value="ECO:0000318"/>
    <property type="project" value="GO_Central"/>
</dbReference>
<dbReference type="GO" id="GO:0000981">
    <property type="term" value="F:DNA-binding transcription factor activity, RNA polymerase II-specific"/>
    <property type="evidence" value="ECO:0000318"/>
    <property type="project" value="GO_Central"/>
</dbReference>
<dbReference type="GO" id="GO:0000978">
    <property type="term" value="F:RNA polymerase II cis-regulatory region sequence-specific DNA binding"/>
    <property type="evidence" value="ECO:0000318"/>
    <property type="project" value="GO_Central"/>
</dbReference>
<dbReference type="GO" id="GO:0008270">
    <property type="term" value="F:zinc ion binding"/>
    <property type="evidence" value="ECO:0007669"/>
    <property type="project" value="UniProtKB-KW"/>
</dbReference>
<dbReference type="GO" id="GO:0006357">
    <property type="term" value="P:regulation of transcription by RNA polymerase II"/>
    <property type="evidence" value="ECO:0000318"/>
    <property type="project" value="GO_Central"/>
</dbReference>
<dbReference type="FunFam" id="3.30.160.60:FF:001956">
    <property type="entry name" value="ZFP37 zinc finger protein"/>
    <property type="match status" value="1"/>
</dbReference>
<dbReference type="FunFam" id="3.30.160.60:FF:000446">
    <property type="entry name" value="Zinc finger protein"/>
    <property type="match status" value="1"/>
</dbReference>
<dbReference type="FunFam" id="3.30.160.60:FF:000005">
    <property type="entry name" value="Zinc finger protein 14 homolog"/>
    <property type="match status" value="2"/>
</dbReference>
<dbReference type="FunFam" id="3.30.160.60:FF:000034">
    <property type="entry name" value="zinc finger protein 25"/>
    <property type="match status" value="1"/>
</dbReference>
<dbReference type="FunFam" id="3.30.160.60:FF:000690">
    <property type="entry name" value="Zinc finger protein 354C"/>
    <property type="match status" value="1"/>
</dbReference>
<dbReference type="FunFam" id="3.30.160.60:FF:000016">
    <property type="entry name" value="zinc finger protein 37 homolog"/>
    <property type="match status" value="1"/>
</dbReference>
<dbReference type="FunFam" id="3.30.160.60:FF:002254">
    <property type="entry name" value="Zinc finger protein 540"/>
    <property type="match status" value="1"/>
</dbReference>
<dbReference type="FunFam" id="3.30.160.60:FF:000176">
    <property type="entry name" value="zinc finger protein 70"/>
    <property type="match status" value="1"/>
</dbReference>
<dbReference type="FunFam" id="3.30.160.60:FF:001671">
    <property type="entry name" value="Zinc finger protein 94"/>
    <property type="match status" value="1"/>
</dbReference>
<dbReference type="Gene3D" id="3.30.160.60">
    <property type="entry name" value="Classic Zinc Finger"/>
    <property type="match status" value="13"/>
</dbReference>
<dbReference type="InterPro" id="IPR001909">
    <property type="entry name" value="KRAB"/>
</dbReference>
<dbReference type="InterPro" id="IPR036236">
    <property type="entry name" value="Znf_C2H2_sf"/>
</dbReference>
<dbReference type="InterPro" id="IPR013087">
    <property type="entry name" value="Znf_C2H2_type"/>
</dbReference>
<dbReference type="PANTHER" id="PTHR24399:SF75">
    <property type="entry name" value="ZFP14 ZINC FINGER PROTEIN-RELATED"/>
    <property type="match status" value="1"/>
</dbReference>
<dbReference type="PANTHER" id="PTHR24399">
    <property type="entry name" value="ZINC FINGER AND BTB DOMAIN-CONTAINING"/>
    <property type="match status" value="1"/>
</dbReference>
<dbReference type="Pfam" id="PF00096">
    <property type="entry name" value="zf-C2H2"/>
    <property type="match status" value="7"/>
</dbReference>
<dbReference type="SMART" id="SM00355">
    <property type="entry name" value="ZnF_C2H2"/>
    <property type="match status" value="11"/>
</dbReference>
<dbReference type="SUPFAM" id="SSF57667">
    <property type="entry name" value="beta-beta-alpha zinc fingers"/>
    <property type="match status" value="7"/>
</dbReference>
<dbReference type="PROSITE" id="PS50805">
    <property type="entry name" value="KRAB"/>
    <property type="match status" value="1"/>
</dbReference>
<dbReference type="PROSITE" id="PS00028">
    <property type="entry name" value="ZINC_FINGER_C2H2_1"/>
    <property type="match status" value="6"/>
</dbReference>
<dbReference type="PROSITE" id="PS50157">
    <property type="entry name" value="ZINC_FINGER_C2H2_2"/>
    <property type="match status" value="11"/>
</dbReference>
<keyword id="KW-0238">DNA-binding</keyword>
<keyword id="KW-0479">Metal-binding</keyword>
<keyword id="KW-0539">Nucleus</keyword>
<keyword id="KW-1185">Reference proteome</keyword>
<keyword id="KW-0677">Repeat</keyword>
<keyword id="KW-0804">Transcription</keyword>
<keyword id="KW-0805">Transcription regulation</keyword>
<keyword id="KW-0862">Zinc</keyword>
<keyword id="KW-0863">Zinc-finger</keyword>
<gene>
    <name type="primary">ZNF355P</name>
    <name type="synonym">ZNF834</name>
    <name type="ORF">PRED65</name>
</gene>
<feature type="chain" id="PRO_0000332124" description="Putative zinc finger protein 355P">
    <location>
        <begin position="1"/>
        <end position="428"/>
    </location>
</feature>
<feature type="domain" description="KRAB" evidence="3">
    <location>
        <begin position="1"/>
        <end position="64"/>
    </location>
</feature>
<feature type="zinc finger region" description="C2H2-type 1" evidence="2">
    <location>
        <begin position="72"/>
        <end position="94"/>
    </location>
</feature>
<feature type="zinc finger region" description="C2H2-type 2" evidence="2">
    <location>
        <begin position="100"/>
        <end position="122"/>
    </location>
</feature>
<feature type="zinc finger region" description="C2H2-type 3" evidence="2">
    <location>
        <begin position="128"/>
        <end position="150"/>
    </location>
</feature>
<feature type="zinc finger region" description="C2H2-type 4; degenerate" evidence="2">
    <location>
        <begin position="156"/>
        <end position="178"/>
    </location>
</feature>
<feature type="zinc finger region" description="C2H2-type 5; degenerate" evidence="2">
    <location>
        <begin position="184"/>
        <end position="206"/>
    </location>
</feature>
<feature type="zinc finger region" description="C2H2-type 6; degenerate" evidence="2">
    <location>
        <begin position="212"/>
        <end position="234"/>
    </location>
</feature>
<feature type="zinc finger region" description="C2H2-type 7; degenerate" evidence="2">
    <location>
        <begin position="263"/>
        <end position="285"/>
    </location>
</feature>
<feature type="zinc finger region" description="C2H2-type 8" evidence="2">
    <location>
        <begin position="291"/>
        <end position="313"/>
    </location>
</feature>
<feature type="zinc finger region" description="C2H2-type 9" evidence="2">
    <location>
        <begin position="335"/>
        <end position="357"/>
    </location>
</feature>
<feature type="zinc finger region" description="C2H2-type 10; degenerate" evidence="2">
    <location>
        <begin position="363"/>
        <end position="385"/>
    </location>
</feature>
<feature type="zinc finger region" description="C2H2-type 11" evidence="2">
    <location>
        <begin position="391"/>
        <end position="413"/>
    </location>
</feature>